<name>MBD3_MOUSE</name>
<sequence>MERKRWECPALPQGWEREEVPRRSGLSAGHRDVFYYSPSGKKFRSKPQLARYLGGSMDLSTFDFRTGKMLMNKMNKSRQRVRYDSSNQVKGKPDLNTALPVRQTASIFKQPVTKITNHPSNKVKSDPQKAVDQPRQLFWEKKLSGLSAFDIAEELVRTMDLPKGLQGVGPGCTDETLLSAIASALHTSTLPITGQLSAAVEKNPGVWLNTAQPLCKAFMVTDDDIRKQEELVQQVRKRLEEALMADMLAHVEELARDGEAPLDKACAEEEEEEEEEEEEPEPERV</sequence>
<reference key="1">
    <citation type="journal article" date="1998" name="Mol. Cell. Biol.">
        <title>Identification and characterization of a family of mammalian methyl-CpG binding proteins.</title>
        <authorList>
            <person name="Hendrich B."/>
            <person name="Bird A."/>
        </authorList>
    </citation>
    <scope>NUCLEOTIDE SEQUENCE (ISOFORM 1)</scope>
    <scope>FUNCTION</scope>
    <scope>TISSUE SPECIFICITY</scope>
    <scope>SUBCELLULAR LOCATION</scope>
</reference>
<reference key="2">
    <citation type="journal article" date="1999" name="Mamm. Genome">
        <title>Genomic structure and chromosomal mapping of the murine and human mbd1, mbd2, mbd3, and mbd4 genes.</title>
        <authorList>
            <person name="Hendrich B."/>
            <person name="Abbott C."/>
            <person name="McQueen H."/>
            <person name="Chambers D."/>
            <person name="Cross S.H."/>
            <person name="Bird A."/>
        </authorList>
    </citation>
    <scope>NUCLEOTIDE SEQUENCE</scope>
    <source>
        <strain>129</strain>
    </source>
</reference>
<reference key="3">
    <citation type="journal article" date="2004" name="Genome Res.">
        <title>The status, quality, and expansion of the NIH full-length cDNA project: the Mammalian Gene Collection (MGC).</title>
        <authorList>
            <consortium name="The MGC Project Team"/>
        </authorList>
    </citation>
    <scope>NUCLEOTIDE SEQUENCE [LARGE SCALE MRNA] (ISOFORM 2)</scope>
    <source>
        <strain>C57BL/6J</strain>
        <tissue>Mammary tumor</tissue>
    </source>
</reference>
<reference key="4">
    <citation type="journal article" date="2004" name="J. Biol. Chem.">
        <title>Role of human ribosomal RNA (rRNA) promoter methylation and of methyl-CpG-binding protein MBD2 in the suppression of rRNA gene expression.</title>
        <authorList>
            <person name="Ghoshal K."/>
            <person name="Majumder S."/>
            <person name="Datta J."/>
            <person name="Motiwala T."/>
            <person name="Bai S."/>
            <person name="Sharma S.M."/>
            <person name="Frankel W."/>
            <person name="Jacob S.T."/>
        </authorList>
    </citation>
    <scope>SUBCELLULAR LOCATION</scope>
</reference>
<reference key="5">
    <citation type="journal article" date="2010" name="Cell">
        <title>A tissue-specific atlas of mouse protein phosphorylation and expression.</title>
        <authorList>
            <person name="Huttlin E.L."/>
            <person name="Jedrychowski M.P."/>
            <person name="Elias J.E."/>
            <person name="Goswami T."/>
            <person name="Rad R."/>
            <person name="Beausoleil S.A."/>
            <person name="Villen J."/>
            <person name="Haas W."/>
            <person name="Sowa M.E."/>
            <person name="Gygi S.P."/>
        </authorList>
    </citation>
    <scope>PHOSPHORYLATION [LARGE SCALE ANALYSIS] AT SER-56</scope>
    <scope>IDENTIFICATION BY MASS SPECTROMETRY [LARGE SCALE ANALYSIS]</scope>
    <source>
        <tissue>Brain</tissue>
        <tissue>Brown adipose tissue</tissue>
        <tissue>Heart</tissue>
        <tissue>Kidney</tissue>
        <tissue>Lung</tissue>
        <tissue>Spleen</tissue>
    </source>
</reference>
<reference key="6">
    <citation type="journal article" date="2018" name="Nat. Commun.">
        <title>A variant NuRD complex containing PWWP2A/B excludes MBD2/3 to regulate transcription at active genes.</title>
        <authorList>
            <person name="Zhang T."/>
            <person name="Wei G."/>
            <person name="Millard C.J."/>
            <person name="Fischer R."/>
            <person name="Konietzny R."/>
            <person name="Kessler B.M."/>
            <person name="Schwabe J.W.R."/>
            <person name="Brockdorff N."/>
        </authorList>
    </citation>
    <scope>ABSENCE OF INTERACTION WITH PWWP2A AND PWWP2B</scope>
</reference>
<reference key="7">
    <citation type="journal article" date="2018" name="Nat. Commun.">
        <title>PWWP2A binds distinct chromatin moieties and interacts with an MTA1-specific core NuRD complex.</title>
        <authorList>
            <person name="Link S."/>
            <person name="Spitzer R.M.M."/>
            <person name="Sana M."/>
            <person name="Torrado M."/>
            <person name="Voelker-Albert M.C."/>
            <person name="Keilhauer E.C."/>
            <person name="Burgold T."/>
            <person name="Puenzeler S."/>
            <person name="Low J.K.K."/>
            <person name="Lindstroem I."/>
            <person name="Nist A."/>
            <person name="Regnard C."/>
            <person name="Stiewe T."/>
            <person name="Hendrich B."/>
            <person name="Imhof A."/>
            <person name="Mann M."/>
            <person name="Mackay J.P."/>
            <person name="Bartkuhn M."/>
            <person name="Hake S.B."/>
        </authorList>
    </citation>
    <scope>ABSENCE OF INTERACTION WITH PWWP2A</scope>
</reference>
<gene>
    <name type="primary">Mbd3</name>
</gene>
<proteinExistence type="evidence at protein level"/>
<organism>
    <name type="scientific">Mus musculus</name>
    <name type="common">Mouse</name>
    <dbReference type="NCBI Taxonomy" id="10090"/>
    <lineage>
        <taxon>Eukaryota</taxon>
        <taxon>Metazoa</taxon>
        <taxon>Chordata</taxon>
        <taxon>Craniata</taxon>
        <taxon>Vertebrata</taxon>
        <taxon>Euteleostomi</taxon>
        <taxon>Mammalia</taxon>
        <taxon>Eutheria</taxon>
        <taxon>Euarchontoglires</taxon>
        <taxon>Glires</taxon>
        <taxon>Rodentia</taxon>
        <taxon>Myomorpha</taxon>
        <taxon>Muroidea</taxon>
        <taxon>Muridae</taxon>
        <taxon>Murinae</taxon>
        <taxon>Mus</taxon>
        <taxon>Mus</taxon>
    </lineage>
</organism>
<evidence type="ECO:0000250" key="1">
    <source>
        <dbReference type="UniProtKB" id="O95983"/>
    </source>
</evidence>
<evidence type="ECO:0000255" key="2"/>
<evidence type="ECO:0000255" key="3">
    <source>
        <dbReference type="PROSITE-ProRule" id="PRU00338"/>
    </source>
</evidence>
<evidence type="ECO:0000256" key="4">
    <source>
        <dbReference type="SAM" id="MobiDB-lite"/>
    </source>
</evidence>
<evidence type="ECO:0000269" key="5">
    <source>
    </source>
</evidence>
<evidence type="ECO:0000269" key="6">
    <source>
    </source>
</evidence>
<evidence type="ECO:0000269" key="7">
    <source>
    </source>
</evidence>
<evidence type="ECO:0000269" key="8">
    <source>
    </source>
</evidence>
<evidence type="ECO:0000303" key="9">
    <source>
    </source>
</evidence>
<evidence type="ECO:0007744" key="10">
    <source>
    </source>
</evidence>
<comment type="function">
    <text evidence="1 8">Acts as a component of the histone deacetylase NuRD complex which participates in the remodeling of chromatin (By similarity). Acts as transcriptional repressor and plays a role in gene silencing (By similarity). Does not bind methylated DNA by itself (PubMed:9774669). Binds to a lesser degree DNA containing unmethylated CpG dinucleotides (By similarity). Recruits histone deacetylases and DNA methyltransferases (By similarity).</text>
</comment>
<comment type="subunit">
    <text evidence="1 6 7">Heterodimer (via N-terminus) with MBD2 (By similarity). Component of the MeCP1 histone deacetylase complex (By similarity). Component of the nucleosome remodeling and deacetylase (NuRD) repressor complex, composed of core proteins MTA1, MTA2, MTA3, RBBP4, RBBP7, HDAC1, HDAC2, MBD2, MBD3, and peripherally associated proteins CDK2AP1, CDK2AP2, GATAD2A, GATAD2B, CHD3, CHD4 and CHD5 (By similarity). The exact stoichiometry of the NuRD complex is unknown, and some subunits such as MBD2 and MBD3, GATAD2A and GATAD2B, and CHD3, CHD4 and CHD5 define mutually exclusive NuRD complexes (By similarity). Interacts with MBD3L2 (via N-terminus); the interaction is direct (By similarity). Interacts with BCL6 (By similarity). Interacts with CDK2AP1 (By similarity). Interacts with HDAC1 (By similarity). Interacts with MTA2 (By similarity). Interacts with DNMT1 (By similarity). Interacts with GATAD2A (By similarity). Interacts with GATAD2B (By similarity). Does not interact with PWWP2A (PubMed:30228260, PubMed:30327463). Does not interact with PWWP2B (PubMed:30228260).</text>
</comment>
<comment type="interaction">
    <interactant intactId="EBI-1994548">
        <id>Q9Z2D8</id>
    </interactant>
    <interactant intactId="EBI-1994523">
        <id>P14404</id>
        <label>Mecom</label>
    </interactant>
    <organismsDiffer>false</organismsDiffer>
    <experiments>4</experiments>
</comment>
<comment type="interaction">
    <interactant intactId="EBI-1994598">
        <id>Q9Z2D8-1</id>
    </interactant>
    <interactant intactId="EBI-1994523">
        <id>P14404</id>
        <label>Mecom</label>
    </interactant>
    <organismsDiffer>false</organismsDiffer>
    <experiments>5</experiments>
</comment>
<comment type="subcellular location">
    <subcellularLocation>
        <location evidence="5 8">Nucleus</location>
    </subcellularLocation>
    <subcellularLocation>
        <location evidence="1">Chromosome</location>
    </subcellularLocation>
    <text evidence="1 8">Detected on chromatin, at promoter regions of active genes (By similarity). Nuclear, in discrete foci (PubMed:9774669).</text>
</comment>
<comment type="alternative products">
    <event type="alternative splicing"/>
    <isoform>
        <id>Q9Z2D8-1</id>
        <name>1</name>
        <sequence type="displayed"/>
    </isoform>
    <isoform>
        <id>Q9Z2D8-2</id>
        <name>2</name>
        <sequence type="described" ref="VSP_011082"/>
    </isoform>
</comment>
<comment type="tissue specificity">
    <text evidence="8">Highly expressed in brain, heart, kidney, liver, lung, skeletal muscle, spleen and testis. Detected at lower levels in embryonic stem cells.</text>
</comment>
<feature type="chain" id="PRO_0000096263" description="Methyl-CpG-binding domain protein 3">
    <location>
        <begin position="1"/>
        <end position="285"/>
    </location>
</feature>
<feature type="domain" description="MBD" evidence="3">
    <location>
        <begin position="1"/>
        <end position="69"/>
    </location>
</feature>
<feature type="region of interest" description="Disordered" evidence="4">
    <location>
        <begin position="255"/>
        <end position="285"/>
    </location>
</feature>
<feature type="coiled-coil region" evidence="2">
    <location>
        <begin position="221"/>
        <end position="279"/>
    </location>
</feature>
<feature type="compositionally biased region" description="Basic and acidic residues" evidence="4">
    <location>
        <begin position="255"/>
        <end position="267"/>
    </location>
</feature>
<feature type="compositionally biased region" description="Acidic residues" evidence="4">
    <location>
        <begin position="268"/>
        <end position="285"/>
    </location>
</feature>
<feature type="modified residue" description="Phosphoserine" evidence="10">
    <location>
        <position position="56"/>
    </location>
</feature>
<feature type="modified residue" description="Phosphoserine" evidence="1">
    <location>
        <position position="85"/>
    </location>
</feature>
<feature type="modified residue" description="Phosphoserine" evidence="1">
    <location>
        <position position="144"/>
    </location>
</feature>
<feature type="cross-link" description="Glycyl lysine isopeptide (Lys-Gly) (interchain with G-Cter in SUMO2)" evidence="1">
    <location>
        <position position="73"/>
    </location>
</feature>
<feature type="cross-link" description="Glycyl lysine isopeptide (Lys-Gly) (interchain with G-Cter in SUMO2)" evidence="1">
    <location>
        <position position="90"/>
    </location>
</feature>
<feature type="cross-link" description="Glycyl lysine isopeptide (Lys-Gly) (interchain with G-Cter in SUMO2)" evidence="1">
    <location>
        <position position="92"/>
    </location>
</feature>
<feature type="splice variant" id="VSP_011082" description="In isoform 2." evidence="9">
    <location>
        <begin position="5"/>
        <end position="36"/>
    </location>
</feature>
<accession>Q9Z2D8</accession>
<accession>Q792D3</accession>
<accession>Q8CFJ1</accession>
<protein>
    <recommendedName>
        <fullName>Methyl-CpG-binding domain protein 3</fullName>
    </recommendedName>
    <alternativeName>
        <fullName>Methyl-CpG-binding protein MBD3</fullName>
    </alternativeName>
</protein>
<keyword id="KW-0025">Alternative splicing</keyword>
<keyword id="KW-0158">Chromosome</keyword>
<keyword id="KW-0175">Coiled coil</keyword>
<keyword id="KW-0238">DNA-binding</keyword>
<keyword id="KW-1017">Isopeptide bond</keyword>
<keyword id="KW-0539">Nucleus</keyword>
<keyword id="KW-0597">Phosphoprotein</keyword>
<keyword id="KW-1185">Reference proteome</keyword>
<keyword id="KW-0804">Transcription</keyword>
<keyword id="KW-0805">Transcription regulation</keyword>
<keyword id="KW-0832">Ubl conjugation</keyword>
<dbReference type="EMBL" id="AF072248">
    <property type="protein sequence ID" value="AAC68877.1"/>
    <property type="molecule type" value="mRNA"/>
</dbReference>
<dbReference type="EMBL" id="AF120995">
    <property type="protein sequence ID" value="AAD48909.1"/>
    <property type="molecule type" value="Genomic_DNA"/>
</dbReference>
<dbReference type="EMBL" id="BC038264">
    <property type="protein sequence ID" value="AAH38264.1"/>
    <property type="molecule type" value="mRNA"/>
</dbReference>
<dbReference type="CCDS" id="CCDS24020.1">
    <molecule id="Q9Z2D8-1"/>
</dbReference>
<dbReference type="CCDS" id="CCDS78860.1">
    <molecule id="Q9Z2D8-2"/>
</dbReference>
<dbReference type="RefSeq" id="NP_001293072.1">
    <molecule id="Q9Z2D8-2"/>
    <property type="nucleotide sequence ID" value="NM_001306143.1"/>
</dbReference>
<dbReference type="RefSeq" id="NP_038623.1">
    <molecule id="Q9Z2D8-1"/>
    <property type="nucleotide sequence ID" value="NM_013595.3"/>
</dbReference>
<dbReference type="BMRB" id="Q9Z2D8"/>
<dbReference type="SMR" id="Q9Z2D8"/>
<dbReference type="BioGRID" id="201332">
    <property type="interactions" value="24"/>
</dbReference>
<dbReference type="ComplexPortal" id="CPX-954">
    <property type="entry name" value="MBD3/NuRD nucleosome remodeling and deacetylase complex"/>
</dbReference>
<dbReference type="CORUM" id="Q9Z2D8"/>
<dbReference type="DIP" id="DIP-46518N"/>
<dbReference type="FunCoup" id="Q9Z2D8">
    <property type="interactions" value="2256"/>
</dbReference>
<dbReference type="IntAct" id="Q9Z2D8">
    <property type="interactions" value="13"/>
</dbReference>
<dbReference type="MINT" id="Q9Z2D8"/>
<dbReference type="STRING" id="10090.ENSMUSP00000089948"/>
<dbReference type="GlyGen" id="Q9Z2D8">
    <property type="glycosylation" value="1 site, 1 N-linked glycan (1 site)"/>
</dbReference>
<dbReference type="iPTMnet" id="Q9Z2D8"/>
<dbReference type="PhosphoSitePlus" id="Q9Z2D8"/>
<dbReference type="jPOST" id="Q9Z2D8"/>
<dbReference type="PaxDb" id="10090-ENSMUSP00000089948"/>
<dbReference type="PeptideAtlas" id="Q9Z2D8"/>
<dbReference type="ProteomicsDB" id="295800">
    <molecule id="Q9Z2D8-1"/>
</dbReference>
<dbReference type="ProteomicsDB" id="295801">
    <molecule id="Q9Z2D8-2"/>
</dbReference>
<dbReference type="Pumba" id="Q9Z2D8"/>
<dbReference type="Antibodypedia" id="22760">
    <property type="antibodies" value="437 antibodies from 42 providers"/>
</dbReference>
<dbReference type="DNASU" id="17192"/>
<dbReference type="Ensembl" id="ENSMUST00000092295.10">
    <molecule id="Q9Z2D8-1"/>
    <property type="protein sequence ID" value="ENSMUSP00000089948.4"/>
    <property type="gene ID" value="ENSMUSG00000035478.15"/>
</dbReference>
<dbReference type="Ensembl" id="ENSMUST00000105349.8">
    <molecule id="Q9Z2D8-2"/>
    <property type="protein sequence ID" value="ENSMUSP00000100986.2"/>
    <property type="gene ID" value="ENSMUSG00000035478.15"/>
</dbReference>
<dbReference type="GeneID" id="17192"/>
<dbReference type="KEGG" id="mmu:17192"/>
<dbReference type="UCSC" id="uc007gda.1">
    <molecule id="Q9Z2D8-2"/>
    <property type="organism name" value="mouse"/>
</dbReference>
<dbReference type="UCSC" id="uc007gdb.1">
    <molecule id="Q9Z2D8-1"/>
    <property type="organism name" value="mouse"/>
</dbReference>
<dbReference type="AGR" id="MGI:1333812"/>
<dbReference type="CTD" id="53615"/>
<dbReference type="MGI" id="MGI:1333812">
    <property type="gene designation" value="Mbd3"/>
</dbReference>
<dbReference type="VEuPathDB" id="HostDB:ENSMUSG00000035478"/>
<dbReference type="eggNOG" id="KOG4161">
    <property type="taxonomic scope" value="Eukaryota"/>
</dbReference>
<dbReference type="GeneTree" id="ENSGT00950000183005"/>
<dbReference type="HOGENOM" id="CLU_069710_0_0_1"/>
<dbReference type="InParanoid" id="Q9Z2D8"/>
<dbReference type="OMA" id="GKMQIQR"/>
<dbReference type="OrthoDB" id="10072024at2759"/>
<dbReference type="PhylomeDB" id="Q9Z2D8"/>
<dbReference type="TreeFam" id="TF325032"/>
<dbReference type="Reactome" id="R-MMU-3214815">
    <property type="pathway name" value="HDACs deacetylate histones"/>
</dbReference>
<dbReference type="Reactome" id="R-MMU-6804758">
    <property type="pathway name" value="Regulation of TP53 Activity through Acetylation"/>
</dbReference>
<dbReference type="Reactome" id="R-MMU-73762">
    <property type="pathway name" value="RNA Polymerase I Transcription Initiation"/>
</dbReference>
<dbReference type="Reactome" id="R-MMU-8943724">
    <property type="pathway name" value="Regulation of PTEN gene transcription"/>
</dbReference>
<dbReference type="BioGRID-ORCS" id="17192">
    <property type="hits" value="8 hits in 82 CRISPR screens"/>
</dbReference>
<dbReference type="ChiTaRS" id="Mbd3">
    <property type="organism name" value="mouse"/>
</dbReference>
<dbReference type="PRO" id="PR:Q9Z2D8"/>
<dbReference type="Proteomes" id="UP000000589">
    <property type="component" value="Chromosome 10"/>
</dbReference>
<dbReference type="RNAct" id="Q9Z2D8">
    <property type="molecule type" value="protein"/>
</dbReference>
<dbReference type="Bgee" id="ENSMUSG00000035478">
    <property type="expression patterns" value="Expressed in ventricular zone and 264 other cell types or tissues"/>
</dbReference>
<dbReference type="ExpressionAtlas" id="Q9Z2D8">
    <property type="expression patterns" value="baseline and differential"/>
</dbReference>
<dbReference type="GO" id="GO:0000785">
    <property type="term" value="C:chromatin"/>
    <property type="evidence" value="ECO:0000314"/>
    <property type="project" value="MGI"/>
</dbReference>
<dbReference type="GO" id="GO:0005737">
    <property type="term" value="C:cytoplasm"/>
    <property type="evidence" value="ECO:0000314"/>
    <property type="project" value="MGI"/>
</dbReference>
<dbReference type="GO" id="GO:0000792">
    <property type="term" value="C:heterochromatin"/>
    <property type="evidence" value="ECO:0000314"/>
    <property type="project" value="MGI"/>
</dbReference>
<dbReference type="GO" id="GO:0005654">
    <property type="term" value="C:nucleoplasm"/>
    <property type="evidence" value="ECO:0000304"/>
    <property type="project" value="Reactome"/>
</dbReference>
<dbReference type="GO" id="GO:0005634">
    <property type="term" value="C:nucleus"/>
    <property type="evidence" value="ECO:0000314"/>
    <property type="project" value="MGI"/>
</dbReference>
<dbReference type="GO" id="GO:0016581">
    <property type="term" value="C:NuRD complex"/>
    <property type="evidence" value="ECO:0000353"/>
    <property type="project" value="MGI"/>
</dbReference>
<dbReference type="GO" id="GO:0032991">
    <property type="term" value="C:protein-containing complex"/>
    <property type="evidence" value="ECO:0000314"/>
    <property type="project" value="MGI"/>
</dbReference>
<dbReference type="GO" id="GO:0003677">
    <property type="term" value="F:DNA binding"/>
    <property type="evidence" value="ECO:0000314"/>
    <property type="project" value="MGI"/>
</dbReference>
<dbReference type="GO" id="GO:0008327">
    <property type="term" value="F:methyl-CpG binding"/>
    <property type="evidence" value="ECO:0000250"/>
    <property type="project" value="UniProtKB"/>
</dbReference>
<dbReference type="GO" id="GO:0006338">
    <property type="term" value="P:chromatin remodeling"/>
    <property type="evidence" value="ECO:0000266"/>
    <property type="project" value="ComplexPortal"/>
</dbReference>
<dbReference type="GO" id="GO:0048568">
    <property type="term" value="P:embryonic organ development"/>
    <property type="evidence" value="ECO:0007669"/>
    <property type="project" value="Ensembl"/>
</dbReference>
<dbReference type="GO" id="GO:0040029">
    <property type="term" value="P:epigenetic regulation of gene expression"/>
    <property type="evidence" value="ECO:0007669"/>
    <property type="project" value="Ensembl"/>
</dbReference>
<dbReference type="GO" id="GO:0001701">
    <property type="term" value="P:in utero embryonic development"/>
    <property type="evidence" value="ECO:0000315"/>
    <property type="project" value="MGI"/>
</dbReference>
<dbReference type="GO" id="GO:0045892">
    <property type="term" value="P:negative regulation of DNA-templated transcription"/>
    <property type="evidence" value="ECO:0000303"/>
    <property type="project" value="ComplexPortal"/>
</dbReference>
<dbReference type="GO" id="GO:0045893">
    <property type="term" value="P:positive regulation of DNA-templated transcription"/>
    <property type="evidence" value="ECO:0000303"/>
    <property type="project" value="ComplexPortal"/>
</dbReference>
<dbReference type="GO" id="GO:0042659">
    <property type="term" value="P:regulation of cell fate specification"/>
    <property type="evidence" value="ECO:0000303"/>
    <property type="project" value="ComplexPortal"/>
</dbReference>
<dbReference type="GO" id="GO:2000736">
    <property type="term" value="P:regulation of stem cell differentiation"/>
    <property type="evidence" value="ECO:0000303"/>
    <property type="project" value="ComplexPortal"/>
</dbReference>
<dbReference type="GO" id="GO:0032355">
    <property type="term" value="P:response to estradiol"/>
    <property type="evidence" value="ECO:0007669"/>
    <property type="project" value="Ensembl"/>
</dbReference>
<dbReference type="GO" id="GO:0031667">
    <property type="term" value="P:response to nutrient levels"/>
    <property type="evidence" value="ECO:0007669"/>
    <property type="project" value="Ensembl"/>
</dbReference>
<dbReference type="GO" id="GO:0009888">
    <property type="term" value="P:tissue development"/>
    <property type="evidence" value="ECO:0000315"/>
    <property type="project" value="MGI"/>
</dbReference>
<dbReference type="GO" id="GO:0003229">
    <property type="term" value="P:ventricular cardiac muscle tissue development"/>
    <property type="evidence" value="ECO:0007669"/>
    <property type="project" value="Ensembl"/>
</dbReference>
<dbReference type="CDD" id="cd01396">
    <property type="entry name" value="MeCP2_MBD"/>
    <property type="match status" value="1"/>
</dbReference>
<dbReference type="FunFam" id="3.30.890.10:FF:000003">
    <property type="entry name" value="methyl-CpG-binding domain protein 2"/>
    <property type="match status" value="1"/>
</dbReference>
<dbReference type="Gene3D" id="3.30.890.10">
    <property type="entry name" value="Methyl-cpg-binding Protein 2, Chain A"/>
    <property type="match status" value="1"/>
</dbReference>
<dbReference type="InterPro" id="IPR016177">
    <property type="entry name" value="DNA-bd_dom_sf"/>
</dbReference>
<dbReference type="InterPro" id="IPR032343">
    <property type="entry name" value="MBD2/MBD3_p55-bd"/>
</dbReference>
<dbReference type="InterPro" id="IPR025884">
    <property type="entry name" value="MeCpG-bd_2/3_C_dom"/>
</dbReference>
<dbReference type="InterPro" id="IPR001739">
    <property type="entry name" value="Methyl_CpG_DNA-bd"/>
</dbReference>
<dbReference type="PANTHER" id="PTHR12396">
    <property type="entry name" value="METHYL-CPG BINDING PROTEIN, MBD"/>
    <property type="match status" value="1"/>
</dbReference>
<dbReference type="PANTHER" id="PTHR12396:SF12">
    <property type="entry name" value="METHYL-CPG-BINDING DOMAIN PROTEIN 3"/>
    <property type="match status" value="1"/>
</dbReference>
<dbReference type="Pfam" id="PF01429">
    <property type="entry name" value="MBD"/>
    <property type="match status" value="1"/>
</dbReference>
<dbReference type="Pfam" id="PF14048">
    <property type="entry name" value="MBD_C"/>
    <property type="match status" value="1"/>
</dbReference>
<dbReference type="Pfam" id="PF16564">
    <property type="entry name" value="MBDa"/>
    <property type="match status" value="1"/>
</dbReference>
<dbReference type="SMART" id="SM00391">
    <property type="entry name" value="MBD"/>
    <property type="match status" value="1"/>
</dbReference>
<dbReference type="SUPFAM" id="SSF54171">
    <property type="entry name" value="DNA-binding domain"/>
    <property type="match status" value="1"/>
</dbReference>
<dbReference type="PROSITE" id="PS50982">
    <property type="entry name" value="MBD"/>
    <property type="match status" value="1"/>
</dbReference>